<feature type="chain" id="PRO_1000127786" description="dTTP/UTP pyrophosphatase">
    <location>
        <begin position="1"/>
        <end position="193"/>
    </location>
</feature>
<feature type="active site" description="Proton acceptor" evidence="1">
    <location>
        <position position="71"/>
    </location>
</feature>
<feature type="site" description="Important for substrate specificity" evidence="1">
    <location>
        <position position="14"/>
    </location>
</feature>
<feature type="site" description="Important for substrate specificity" evidence="1">
    <location>
        <position position="72"/>
    </location>
</feature>
<feature type="site" description="Important for substrate specificity" evidence="1">
    <location>
        <position position="156"/>
    </location>
</feature>
<gene>
    <name type="ordered locus">Gbem_2708</name>
</gene>
<comment type="function">
    <text evidence="1">Nucleoside triphosphate pyrophosphatase that hydrolyzes dTTP and UTP. May have a dual role in cell division arrest and in preventing the incorporation of modified nucleotides into cellular nucleic acids.</text>
</comment>
<comment type="catalytic activity">
    <reaction evidence="1">
        <text>dTTP + H2O = dTMP + diphosphate + H(+)</text>
        <dbReference type="Rhea" id="RHEA:28534"/>
        <dbReference type="ChEBI" id="CHEBI:15377"/>
        <dbReference type="ChEBI" id="CHEBI:15378"/>
        <dbReference type="ChEBI" id="CHEBI:33019"/>
        <dbReference type="ChEBI" id="CHEBI:37568"/>
        <dbReference type="ChEBI" id="CHEBI:63528"/>
        <dbReference type="EC" id="3.6.1.9"/>
    </reaction>
</comment>
<comment type="catalytic activity">
    <reaction evidence="1">
        <text>UTP + H2O = UMP + diphosphate + H(+)</text>
        <dbReference type="Rhea" id="RHEA:29395"/>
        <dbReference type="ChEBI" id="CHEBI:15377"/>
        <dbReference type="ChEBI" id="CHEBI:15378"/>
        <dbReference type="ChEBI" id="CHEBI:33019"/>
        <dbReference type="ChEBI" id="CHEBI:46398"/>
        <dbReference type="ChEBI" id="CHEBI:57865"/>
        <dbReference type="EC" id="3.6.1.9"/>
    </reaction>
</comment>
<comment type="cofactor">
    <cofactor evidence="1">
        <name>a divalent metal cation</name>
        <dbReference type="ChEBI" id="CHEBI:60240"/>
    </cofactor>
</comment>
<comment type="subcellular location">
    <subcellularLocation>
        <location evidence="1">Cytoplasm</location>
    </subcellularLocation>
</comment>
<comment type="similarity">
    <text evidence="1">Belongs to the Maf family. YhdE subfamily.</text>
</comment>
<accession>B5EHR3</accession>
<dbReference type="EC" id="3.6.1.9" evidence="1"/>
<dbReference type="EMBL" id="CP001124">
    <property type="protein sequence ID" value="ACH39712.1"/>
    <property type="molecule type" value="Genomic_DNA"/>
</dbReference>
<dbReference type="RefSeq" id="WP_012531138.1">
    <property type="nucleotide sequence ID" value="NC_011146.1"/>
</dbReference>
<dbReference type="SMR" id="B5EHR3"/>
<dbReference type="STRING" id="404380.Gbem_2708"/>
<dbReference type="KEGG" id="gbm:Gbem_2708"/>
<dbReference type="eggNOG" id="COG0424">
    <property type="taxonomic scope" value="Bacteria"/>
</dbReference>
<dbReference type="HOGENOM" id="CLU_040416_2_1_7"/>
<dbReference type="OrthoDB" id="9807767at2"/>
<dbReference type="Proteomes" id="UP000008825">
    <property type="component" value="Chromosome"/>
</dbReference>
<dbReference type="GO" id="GO:0005737">
    <property type="term" value="C:cytoplasm"/>
    <property type="evidence" value="ECO:0007669"/>
    <property type="project" value="UniProtKB-SubCell"/>
</dbReference>
<dbReference type="GO" id="GO:0036218">
    <property type="term" value="F:dTTP diphosphatase activity"/>
    <property type="evidence" value="ECO:0007669"/>
    <property type="project" value="RHEA"/>
</dbReference>
<dbReference type="GO" id="GO:0036221">
    <property type="term" value="F:UTP diphosphatase activity"/>
    <property type="evidence" value="ECO:0007669"/>
    <property type="project" value="RHEA"/>
</dbReference>
<dbReference type="GO" id="GO:0009117">
    <property type="term" value="P:nucleotide metabolic process"/>
    <property type="evidence" value="ECO:0007669"/>
    <property type="project" value="UniProtKB-KW"/>
</dbReference>
<dbReference type="CDD" id="cd00555">
    <property type="entry name" value="Maf"/>
    <property type="match status" value="1"/>
</dbReference>
<dbReference type="Gene3D" id="3.90.950.10">
    <property type="match status" value="1"/>
</dbReference>
<dbReference type="HAMAP" id="MF_00528">
    <property type="entry name" value="Maf"/>
    <property type="match status" value="1"/>
</dbReference>
<dbReference type="InterPro" id="IPR029001">
    <property type="entry name" value="ITPase-like_fam"/>
</dbReference>
<dbReference type="InterPro" id="IPR003697">
    <property type="entry name" value="Maf-like"/>
</dbReference>
<dbReference type="NCBIfam" id="TIGR00172">
    <property type="entry name" value="maf"/>
    <property type="match status" value="1"/>
</dbReference>
<dbReference type="NCBIfam" id="NF010948">
    <property type="entry name" value="PRK14368.1"/>
    <property type="match status" value="1"/>
</dbReference>
<dbReference type="PANTHER" id="PTHR43213">
    <property type="entry name" value="BIFUNCTIONAL DTTP/UTP PYROPHOSPHATASE/METHYLTRANSFERASE PROTEIN-RELATED"/>
    <property type="match status" value="1"/>
</dbReference>
<dbReference type="PANTHER" id="PTHR43213:SF5">
    <property type="entry name" value="BIFUNCTIONAL DTTP_UTP PYROPHOSPHATASE_METHYLTRANSFERASE PROTEIN-RELATED"/>
    <property type="match status" value="1"/>
</dbReference>
<dbReference type="Pfam" id="PF02545">
    <property type="entry name" value="Maf"/>
    <property type="match status" value="1"/>
</dbReference>
<dbReference type="PIRSF" id="PIRSF006305">
    <property type="entry name" value="Maf"/>
    <property type="match status" value="1"/>
</dbReference>
<dbReference type="SUPFAM" id="SSF52972">
    <property type="entry name" value="ITPase-like"/>
    <property type="match status" value="1"/>
</dbReference>
<reference key="1">
    <citation type="submission" date="2008-07" db="EMBL/GenBank/DDBJ databases">
        <title>Complete sequence of Geobacter bemidjiensis BEM.</title>
        <authorList>
            <consortium name="US DOE Joint Genome Institute"/>
            <person name="Lucas S."/>
            <person name="Copeland A."/>
            <person name="Lapidus A."/>
            <person name="Glavina del Rio T."/>
            <person name="Dalin E."/>
            <person name="Tice H."/>
            <person name="Bruce D."/>
            <person name="Goodwin L."/>
            <person name="Pitluck S."/>
            <person name="Kiss H."/>
            <person name="Brettin T."/>
            <person name="Detter J.C."/>
            <person name="Han C."/>
            <person name="Kuske C.R."/>
            <person name="Schmutz J."/>
            <person name="Larimer F."/>
            <person name="Land M."/>
            <person name="Hauser L."/>
            <person name="Kyrpides N."/>
            <person name="Lykidis A."/>
            <person name="Lovley D."/>
            <person name="Richardson P."/>
        </authorList>
    </citation>
    <scope>NUCLEOTIDE SEQUENCE [LARGE SCALE GENOMIC DNA]</scope>
    <source>
        <strain>ATCC BAA-1014 / DSM 16622 / JCM 12645 / Bem</strain>
    </source>
</reference>
<evidence type="ECO:0000255" key="1">
    <source>
        <dbReference type="HAMAP-Rule" id="MF_00528"/>
    </source>
</evidence>
<proteinExistence type="inferred from homology"/>
<keyword id="KW-0963">Cytoplasm</keyword>
<keyword id="KW-0378">Hydrolase</keyword>
<keyword id="KW-0546">Nucleotide metabolism</keyword>
<keyword id="KW-1185">Reference proteome</keyword>
<organism>
    <name type="scientific">Citrifermentans bemidjiense (strain ATCC BAA-1014 / DSM 16622 / JCM 12645 / Bem)</name>
    <name type="common">Geobacter bemidjiensis</name>
    <dbReference type="NCBI Taxonomy" id="404380"/>
    <lineage>
        <taxon>Bacteria</taxon>
        <taxon>Pseudomonadati</taxon>
        <taxon>Thermodesulfobacteriota</taxon>
        <taxon>Desulfuromonadia</taxon>
        <taxon>Geobacterales</taxon>
        <taxon>Geobacteraceae</taxon>
        <taxon>Citrifermentans</taxon>
    </lineage>
</organism>
<protein>
    <recommendedName>
        <fullName evidence="1">dTTP/UTP pyrophosphatase</fullName>
        <shortName evidence="1">dTTPase/UTPase</shortName>
        <ecNumber evidence="1">3.6.1.9</ecNumber>
    </recommendedName>
    <alternativeName>
        <fullName evidence="1">Nucleoside triphosphate pyrophosphatase</fullName>
    </alternativeName>
    <alternativeName>
        <fullName evidence="1">Nucleotide pyrophosphatase</fullName>
        <shortName evidence="1">Nucleotide PPase</shortName>
    </alternativeName>
</protein>
<name>NTPPA_CITBB</name>
<sequence length="193" mass="20770">MKNSSIVLASASPRRSELLESAGIQFRVVPADINEEPFPGEEPVDHVQRLAEGKARAAAELAEGRFFLGADTIVLCDGEIMGKPKDAADAKRMLNKLSGVPHEVVTGFAIYDRERKGAVVEAIRTKVFFKKLRDEEILDYIATGCPFDKAGAYAIQGGAAHMVQKIEGSYTNVVGLPLCEVVDALRVIGALGN</sequence>